<organism>
    <name type="scientific">Limosilactobacillus fermentum (strain NBRC 3956 / LMG 18251)</name>
    <name type="common">Lactobacillus fermentum</name>
    <dbReference type="NCBI Taxonomy" id="334390"/>
    <lineage>
        <taxon>Bacteria</taxon>
        <taxon>Bacillati</taxon>
        <taxon>Bacillota</taxon>
        <taxon>Bacilli</taxon>
        <taxon>Lactobacillales</taxon>
        <taxon>Lactobacillaceae</taxon>
        <taxon>Limosilactobacillus</taxon>
    </lineage>
</organism>
<proteinExistence type="inferred from homology"/>
<reference key="1">
    <citation type="journal article" date="2008" name="DNA Res.">
        <title>Comparative genome analysis of Lactobacillus reuteri and Lactobacillus fermentum reveal a genomic island for reuterin and cobalamin production.</title>
        <authorList>
            <person name="Morita H."/>
            <person name="Toh H."/>
            <person name="Fukuda S."/>
            <person name="Horikawa H."/>
            <person name="Oshima K."/>
            <person name="Suzuki T."/>
            <person name="Murakami M."/>
            <person name="Hisamatsu S."/>
            <person name="Kato Y."/>
            <person name="Takizawa T."/>
            <person name="Fukuoka H."/>
            <person name="Yoshimura T."/>
            <person name="Itoh K."/>
            <person name="O'Sullivan D.J."/>
            <person name="McKay L.L."/>
            <person name="Ohno H."/>
            <person name="Kikuchi J."/>
            <person name="Masaoka T."/>
            <person name="Hattori M."/>
        </authorList>
    </citation>
    <scope>NUCLEOTIDE SEQUENCE [LARGE SCALE GENOMIC DNA]</scope>
    <source>
        <strain>NBRC 3956 / LMG 18251</strain>
    </source>
</reference>
<dbReference type="EC" id="3.2.2.27" evidence="1"/>
<dbReference type="EMBL" id="AP008937">
    <property type="protein sequence ID" value="BAG26709.1"/>
    <property type="molecule type" value="Genomic_DNA"/>
</dbReference>
<dbReference type="RefSeq" id="WP_004563264.1">
    <property type="nucleotide sequence ID" value="NC_010610.1"/>
</dbReference>
<dbReference type="SMR" id="B2GAM7"/>
<dbReference type="KEGG" id="lfe:LAF_0373"/>
<dbReference type="eggNOG" id="COG0692">
    <property type="taxonomic scope" value="Bacteria"/>
</dbReference>
<dbReference type="HOGENOM" id="CLU_032162_3_0_9"/>
<dbReference type="Proteomes" id="UP000001697">
    <property type="component" value="Chromosome"/>
</dbReference>
<dbReference type="GO" id="GO:0005737">
    <property type="term" value="C:cytoplasm"/>
    <property type="evidence" value="ECO:0007669"/>
    <property type="project" value="UniProtKB-SubCell"/>
</dbReference>
<dbReference type="GO" id="GO:0004844">
    <property type="term" value="F:uracil DNA N-glycosylase activity"/>
    <property type="evidence" value="ECO:0007669"/>
    <property type="project" value="UniProtKB-UniRule"/>
</dbReference>
<dbReference type="GO" id="GO:0097510">
    <property type="term" value="P:base-excision repair, AP site formation via deaminated base removal"/>
    <property type="evidence" value="ECO:0007669"/>
    <property type="project" value="TreeGrafter"/>
</dbReference>
<dbReference type="CDD" id="cd10027">
    <property type="entry name" value="UDG-F1-like"/>
    <property type="match status" value="1"/>
</dbReference>
<dbReference type="FunFam" id="3.40.470.10:FF:000001">
    <property type="entry name" value="Uracil-DNA glycosylase"/>
    <property type="match status" value="1"/>
</dbReference>
<dbReference type="Gene3D" id="3.40.470.10">
    <property type="entry name" value="Uracil-DNA glycosylase-like domain"/>
    <property type="match status" value="1"/>
</dbReference>
<dbReference type="HAMAP" id="MF_00148">
    <property type="entry name" value="UDG"/>
    <property type="match status" value="1"/>
</dbReference>
<dbReference type="InterPro" id="IPR002043">
    <property type="entry name" value="UDG_fam1"/>
</dbReference>
<dbReference type="InterPro" id="IPR018085">
    <property type="entry name" value="Ura-DNA_Glyclase_AS"/>
</dbReference>
<dbReference type="InterPro" id="IPR005122">
    <property type="entry name" value="Uracil-DNA_glycosylase-like"/>
</dbReference>
<dbReference type="InterPro" id="IPR036895">
    <property type="entry name" value="Uracil-DNA_glycosylase-like_sf"/>
</dbReference>
<dbReference type="NCBIfam" id="NF003588">
    <property type="entry name" value="PRK05254.1-1"/>
    <property type="match status" value="1"/>
</dbReference>
<dbReference type="NCBIfam" id="NF003589">
    <property type="entry name" value="PRK05254.1-2"/>
    <property type="match status" value="1"/>
</dbReference>
<dbReference type="NCBIfam" id="NF003591">
    <property type="entry name" value="PRK05254.1-4"/>
    <property type="match status" value="1"/>
</dbReference>
<dbReference type="NCBIfam" id="NF003592">
    <property type="entry name" value="PRK05254.1-5"/>
    <property type="match status" value="1"/>
</dbReference>
<dbReference type="NCBIfam" id="TIGR00628">
    <property type="entry name" value="ung"/>
    <property type="match status" value="1"/>
</dbReference>
<dbReference type="PANTHER" id="PTHR11264">
    <property type="entry name" value="URACIL-DNA GLYCOSYLASE"/>
    <property type="match status" value="1"/>
</dbReference>
<dbReference type="PANTHER" id="PTHR11264:SF0">
    <property type="entry name" value="URACIL-DNA GLYCOSYLASE"/>
    <property type="match status" value="1"/>
</dbReference>
<dbReference type="Pfam" id="PF03167">
    <property type="entry name" value="UDG"/>
    <property type="match status" value="1"/>
</dbReference>
<dbReference type="SMART" id="SM00986">
    <property type="entry name" value="UDG"/>
    <property type="match status" value="1"/>
</dbReference>
<dbReference type="SMART" id="SM00987">
    <property type="entry name" value="UreE_C"/>
    <property type="match status" value="1"/>
</dbReference>
<dbReference type="SUPFAM" id="SSF52141">
    <property type="entry name" value="Uracil-DNA glycosylase-like"/>
    <property type="match status" value="1"/>
</dbReference>
<dbReference type="PROSITE" id="PS00130">
    <property type="entry name" value="U_DNA_GLYCOSYLASE"/>
    <property type="match status" value="1"/>
</dbReference>
<feature type="chain" id="PRO_1000096589" description="Uracil-DNA glycosylase">
    <location>
        <begin position="1"/>
        <end position="229"/>
    </location>
</feature>
<feature type="active site" description="Proton acceptor" evidence="1">
    <location>
        <position position="65"/>
    </location>
</feature>
<name>UNG_LIMF3</name>
<protein>
    <recommendedName>
        <fullName evidence="1">Uracil-DNA glycosylase</fullName>
        <shortName evidence="1">UDG</shortName>
        <ecNumber evidence="1">3.2.2.27</ecNumber>
    </recommendedName>
</protein>
<sequence length="229" mass="25937">MKQLINNDWWPVLKPQFETANYQQLHNFLVDEYGHQQVYPEMHHIFEAFNWTPFSKVKVVILGQDPYHGPGQAHGCSFSVLPGVAVPPSLQNIYKELQADLGCPPVKHGYLRSWAEQGVLLLNSVLTVRAGQAYSHQGHGWEQLTDAAIVALSKRPTPVVFILWGRAARDKKRLIDLKRNFVVESAHPSPLSAYRGFFGSRPFSKTNQFLEMTGQAPINWQLPSTVDHL</sequence>
<keyword id="KW-0963">Cytoplasm</keyword>
<keyword id="KW-0227">DNA damage</keyword>
<keyword id="KW-0234">DNA repair</keyword>
<keyword id="KW-0378">Hydrolase</keyword>
<keyword id="KW-1185">Reference proteome</keyword>
<comment type="function">
    <text evidence="1">Excises uracil residues from the DNA which can arise as a result of misincorporation of dUMP residues by DNA polymerase or due to deamination of cytosine.</text>
</comment>
<comment type="catalytic activity">
    <reaction evidence="1">
        <text>Hydrolyzes single-stranded DNA or mismatched double-stranded DNA and polynucleotides, releasing free uracil.</text>
        <dbReference type="EC" id="3.2.2.27"/>
    </reaction>
</comment>
<comment type="subcellular location">
    <subcellularLocation>
        <location evidence="1">Cytoplasm</location>
    </subcellularLocation>
</comment>
<comment type="similarity">
    <text evidence="1">Belongs to the uracil-DNA glycosylase (UDG) superfamily. UNG family.</text>
</comment>
<accession>B2GAM7</accession>
<evidence type="ECO:0000255" key="1">
    <source>
        <dbReference type="HAMAP-Rule" id="MF_00148"/>
    </source>
</evidence>
<gene>
    <name evidence="1" type="primary">ung</name>
    <name type="ordered locus">LAF_0373</name>
</gene>